<evidence type="ECO:0000250" key="1"/>
<evidence type="ECO:0000269" key="2">
    <source>
    </source>
</evidence>
<evidence type="ECO:0000269" key="3">
    <source>
    </source>
</evidence>
<evidence type="ECO:0000269" key="4">
    <source>
    </source>
</evidence>
<evidence type="ECO:0000305" key="5"/>
<comment type="function">
    <text evidence="1 2">Involved in ubiquitination and subsequent proteasomal degradation of target proteins. Together with CUL1, RBX1 and a F-box protein, it forms a SCF E3 ubiquitin ligase complex. The functional specificity of this complex depends on the type of F-box protein. In the SCF complex, it serves as an adapter that links the F-box protein to CUL1 (By similarity).</text>
</comment>
<comment type="pathway">
    <text>Protein modification; protein ubiquitination.</text>
</comment>
<comment type="subunit">
    <text evidence="1 3 4">Part of a SCF (SKP1-cullin-F-box) protein ligase complex (By similarity). Interacts with CPR1/CPR30, At3g61590, At4g39550 and At5g49610.</text>
</comment>
<comment type="interaction">
    <interactant intactId="EBI-401221">
        <id>O81057</id>
    </interactant>
    <interactant intactId="EBI-687388">
        <id>Q8LEA8</id>
        <label>EID1</label>
    </interactant>
    <organismsDiffer>false</organismsDiffer>
    <experiments>3</experiments>
</comment>
<comment type="subcellular location">
    <subcellularLocation>
        <location evidence="1">Nucleus</location>
    </subcellularLocation>
</comment>
<comment type="tissue specificity">
    <text evidence="2 3">Restricted to inflorescences, pollen and leaves.</text>
</comment>
<comment type="developmental stage">
    <text evidence="2">Expressed in male meiocytes and tetrads.</text>
</comment>
<comment type="similarity">
    <text evidence="5">Belongs to the SKP1 family.</text>
</comment>
<proteinExistence type="evidence at protein level"/>
<name>ASK14_ARATH</name>
<keyword id="KW-0539">Nucleus</keyword>
<keyword id="KW-1185">Reference proteome</keyword>
<keyword id="KW-0833">Ubl conjugation pathway</keyword>
<accession>O81057</accession>
<sequence length="149" mass="17102">MSSNKIVLSSSDGESFEVEEAVARKLKIVEHMIEDDCVVTEVPLQNVTGKILSIVVEYCKKHVVDEESDEFKTWDEEFMKKFDQPTVFQLLLAANYLNIKGLLDLSAQTVADRIKDKTPEEIREIFNIENDFTPEEEAAVRKENAWAFE</sequence>
<protein>
    <recommendedName>
        <fullName>SKP1-like protein 14</fullName>
        <shortName>AtSK14</shortName>
    </recommendedName>
</protein>
<reference key="1">
    <citation type="journal article" date="1999" name="Nature">
        <title>Sequence and analysis of chromosome 2 of the plant Arabidopsis thaliana.</title>
        <authorList>
            <person name="Lin X."/>
            <person name="Kaul S."/>
            <person name="Rounsley S.D."/>
            <person name="Shea T.P."/>
            <person name="Benito M.-I."/>
            <person name="Town C.D."/>
            <person name="Fujii C.Y."/>
            <person name="Mason T.M."/>
            <person name="Bowman C.L."/>
            <person name="Barnstead M.E."/>
            <person name="Feldblyum T.V."/>
            <person name="Buell C.R."/>
            <person name="Ketchum K.A."/>
            <person name="Lee J.J."/>
            <person name="Ronning C.M."/>
            <person name="Koo H.L."/>
            <person name="Moffat K.S."/>
            <person name="Cronin L.A."/>
            <person name="Shen M."/>
            <person name="Pai G."/>
            <person name="Van Aken S."/>
            <person name="Umayam L."/>
            <person name="Tallon L.J."/>
            <person name="Gill J.E."/>
            <person name="Adams M.D."/>
            <person name="Carrera A.J."/>
            <person name="Creasy T.H."/>
            <person name="Goodman H.M."/>
            <person name="Somerville C.R."/>
            <person name="Copenhaver G.P."/>
            <person name="Preuss D."/>
            <person name="Nierman W.C."/>
            <person name="White O."/>
            <person name="Eisen J.A."/>
            <person name="Salzberg S.L."/>
            <person name="Fraser C.M."/>
            <person name="Venter J.C."/>
        </authorList>
    </citation>
    <scope>NUCLEOTIDE SEQUENCE [LARGE SCALE GENOMIC DNA]</scope>
    <source>
        <strain>cv. Columbia</strain>
    </source>
</reference>
<reference key="2">
    <citation type="journal article" date="2017" name="Plant J.">
        <title>Araport11: a complete reannotation of the Arabidopsis thaliana reference genome.</title>
        <authorList>
            <person name="Cheng C.Y."/>
            <person name="Krishnakumar V."/>
            <person name="Chan A.P."/>
            <person name="Thibaud-Nissen F."/>
            <person name="Schobel S."/>
            <person name="Town C.D."/>
        </authorList>
    </citation>
    <scope>GENOME REANNOTATION</scope>
    <source>
        <strain>cv. Columbia</strain>
    </source>
</reference>
<reference key="3">
    <citation type="submission" date="2005-05" db="EMBL/GenBank/DDBJ databases">
        <authorList>
            <person name="Underwood B.A."/>
            <person name="Xiao Y.-L."/>
            <person name="Moskal W.A. Jr."/>
            <person name="Monaghan E.L."/>
            <person name="Wang W."/>
            <person name="Redman J.C."/>
            <person name="Wu H.C."/>
            <person name="Utterback T."/>
            <person name="Town C.D."/>
        </authorList>
    </citation>
    <scope>NUCLEOTIDE SEQUENCE [LARGE SCALE MRNA]</scope>
    <source>
        <strain>cv. Columbia</strain>
    </source>
</reference>
<reference key="4">
    <citation type="journal article" date="2003" name="Plant Physiol.">
        <title>Members of the Arabidopsis-SKP1-like gene family exhibit a variety of expression patterns and may play diverse roles in Arabidopsis.</title>
        <authorList>
            <person name="Zhao D."/>
            <person name="Ni W."/>
            <person name="Feng B."/>
            <person name="Han T."/>
            <person name="Petrasek M.G."/>
            <person name="Ma H."/>
        </authorList>
    </citation>
    <scope>FUNCTION</scope>
    <scope>GENE FAMILY</scope>
    <scope>NOMENCLATURE</scope>
    <scope>TISSUE SPECIFICITY</scope>
    <scope>DEVELOPMENTAL STAGE</scope>
</reference>
<reference key="5">
    <citation type="journal article" date="2004" name="Plant Cell Physiol.">
        <title>Expression and interaction analysis of Arabidopsis Skp1-related genes.</title>
        <authorList>
            <person name="Takahashi N."/>
            <person name="Kuroda H."/>
            <person name="Kuromori T."/>
            <person name="Hirayama T."/>
            <person name="Seki M."/>
            <person name="Shinozaki K."/>
            <person name="Shimada H."/>
            <person name="Matsui M."/>
        </authorList>
    </citation>
    <scope>TISSUE SPECIFICITY</scope>
    <scope>INTERACTION WITH AT4G39550; AT3G61590 AND AT5G49610</scope>
</reference>
<reference key="6">
    <citation type="journal article" date="2009" name="Plant J.">
        <title>An F-box gene, CPR30, functions as a negative regulator of the defense response in Arabidopsis.</title>
        <authorList>
            <person name="Gou M."/>
            <person name="Su N."/>
            <person name="Zheng J."/>
            <person name="Huai J."/>
            <person name="Wu G."/>
            <person name="Zhao J."/>
            <person name="He J."/>
            <person name="Tang D."/>
            <person name="Yang S."/>
            <person name="Wang G."/>
        </authorList>
    </citation>
    <scope>INTERACTION WITH CPR1/CPR30</scope>
</reference>
<gene>
    <name type="primary">ASK14</name>
    <name type="ordered locus">At2g03170</name>
    <name type="ORF">T18E12.16</name>
</gene>
<dbReference type="EMBL" id="AC005313">
    <property type="protein sequence ID" value="AAC34485.1"/>
    <property type="molecule type" value="Genomic_DNA"/>
</dbReference>
<dbReference type="EMBL" id="CP002685">
    <property type="protein sequence ID" value="AEC05671.1"/>
    <property type="molecule type" value="Genomic_DNA"/>
</dbReference>
<dbReference type="EMBL" id="DQ056526">
    <property type="protein sequence ID" value="AAY78682.1"/>
    <property type="molecule type" value="mRNA"/>
</dbReference>
<dbReference type="PIR" id="T02709">
    <property type="entry name" value="T02709"/>
</dbReference>
<dbReference type="RefSeq" id="NP_565296.1">
    <property type="nucleotide sequence ID" value="NM_126368.2"/>
</dbReference>
<dbReference type="SMR" id="O81057"/>
<dbReference type="BioGRID" id="248">
    <property type="interactions" value="70"/>
</dbReference>
<dbReference type="ComplexPortal" id="CPX-1441">
    <property type="entry name" value="SCF(COI1) ubiquitin ligase complex, variant CUL1-RBX1A-ASK14"/>
</dbReference>
<dbReference type="ComplexPortal" id="CPX-1462">
    <property type="entry name" value="SCF(COI1) ubiquitin ligase complex, variant CUL1-RBX1B-ASK14"/>
</dbReference>
<dbReference type="ComplexPortal" id="CPX-1484">
    <property type="entry name" value="SCF(COI1) ubiquitin ligase complex, variant CUL2-RBX1A-ASK14"/>
</dbReference>
<dbReference type="ComplexPortal" id="CPX-1507">
    <property type="entry name" value="SCF(COI1) ubiquitin ligase complex, variant CUL2-RBX1B-ASK14"/>
</dbReference>
<dbReference type="ComplexPortal" id="CPX-1527">
    <property type="entry name" value="SCF(TIR1) ubiquitin ligase complex, variant CUL1-RBX1A-ASK14"/>
</dbReference>
<dbReference type="ComplexPortal" id="CPX-1548">
    <property type="entry name" value="SCF(TIR1) ubiquitin ligase complex, variant CUL1-RBX1B-ASK14"/>
</dbReference>
<dbReference type="ComplexPortal" id="CPX-1570">
    <property type="entry name" value="SCF(TIR1) ubiquitin ligase complex, variant CUL2-RBX1A-ASK14"/>
</dbReference>
<dbReference type="ComplexPortal" id="CPX-1591">
    <property type="entry name" value="SCF(TIR1) ubiquitin ligase complex, variant CUL2-RBX1B-ASK14"/>
</dbReference>
<dbReference type="DIP" id="DIP-31332N"/>
<dbReference type="FunCoup" id="O81057">
    <property type="interactions" value="2538"/>
</dbReference>
<dbReference type="IntAct" id="O81057">
    <property type="interactions" value="19"/>
</dbReference>
<dbReference type="STRING" id="3702.O81057"/>
<dbReference type="PaxDb" id="3702-AT2G03170.1"/>
<dbReference type="ProteomicsDB" id="246505"/>
<dbReference type="EnsemblPlants" id="AT2G03170.1">
    <property type="protein sequence ID" value="AT2G03170.1"/>
    <property type="gene ID" value="AT2G03170"/>
</dbReference>
<dbReference type="GeneID" id="814846"/>
<dbReference type="Gramene" id="AT2G03170.1">
    <property type="protein sequence ID" value="AT2G03170.1"/>
    <property type="gene ID" value="AT2G03170"/>
</dbReference>
<dbReference type="KEGG" id="ath:AT2G03170"/>
<dbReference type="Araport" id="AT2G03170"/>
<dbReference type="TAIR" id="AT2G03170">
    <property type="gene designation" value="SK14"/>
</dbReference>
<dbReference type="eggNOG" id="KOG1724">
    <property type="taxonomic scope" value="Eukaryota"/>
</dbReference>
<dbReference type="HOGENOM" id="CLU_059252_6_1_1"/>
<dbReference type="InParanoid" id="O81057"/>
<dbReference type="OMA" id="EDNCAGK"/>
<dbReference type="PhylomeDB" id="O81057"/>
<dbReference type="UniPathway" id="UPA00143"/>
<dbReference type="PRO" id="PR:O81057"/>
<dbReference type="Proteomes" id="UP000006548">
    <property type="component" value="Chromosome 2"/>
</dbReference>
<dbReference type="ExpressionAtlas" id="O81057">
    <property type="expression patterns" value="baseline and differential"/>
</dbReference>
<dbReference type="GO" id="GO:0005634">
    <property type="term" value="C:nucleus"/>
    <property type="evidence" value="ECO:0007669"/>
    <property type="project" value="UniProtKB-SubCell"/>
</dbReference>
<dbReference type="GO" id="GO:0019005">
    <property type="term" value="C:SCF ubiquitin ligase complex"/>
    <property type="evidence" value="ECO:0000250"/>
    <property type="project" value="ComplexPortal"/>
</dbReference>
<dbReference type="GO" id="GO:0009734">
    <property type="term" value="P:auxin-activated signaling pathway"/>
    <property type="evidence" value="ECO:0000303"/>
    <property type="project" value="ComplexPortal"/>
</dbReference>
<dbReference type="GO" id="GO:0009867">
    <property type="term" value="P:jasmonic acid mediated signaling pathway"/>
    <property type="evidence" value="ECO:0000315"/>
    <property type="project" value="ComplexPortal"/>
</dbReference>
<dbReference type="GO" id="GO:0016567">
    <property type="term" value="P:protein ubiquitination"/>
    <property type="evidence" value="ECO:0007669"/>
    <property type="project" value="UniProtKB-UniPathway"/>
</dbReference>
<dbReference type="GO" id="GO:0009733">
    <property type="term" value="P:response to auxin"/>
    <property type="evidence" value="ECO:0000303"/>
    <property type="project" value="ComplexPortal"/>
</dbReference>
<dbReference type="GO" id="GO:0009753">
    <property type="term" value="P:response to jasmonic acid"/>
    <property type="evidence" value="ECO:0000315"/>
    <property type="project" value="ComplexPortal"/>
</dbReference>
<dbReference type="GO" id="GO:0006511">
    <property type="term" value="P:ubiquitin-dependent protein catabolic process"/>
    <property type="evidence" value="ECO:0000304"/>
    <property type="project" value="TAIR"/>
</dbReference>
<dbReference type="CDD" id="cd18322">
    <property type="entry name" value="BTB_POZ_SKP1"/>
    <property type="match status" value="1"/>
</dbReference>
<dbReference type="FunFam" id="3.30.710.10:FF:000269">
    <property type="entry name" value="SKP1-like protein 14"/>
    <property type="match status" value="1"/>
</dbReference>
<dbReference type="Gene3D" id="3.30.710.10">
    <property type="entry name" value="Potassium Channel Kv1.1, Chain A"/>
    <property type="match status" value="1"/>
</dbReference>
<dbReference type="InterPro" id="IPR016897">
    <property type="entry name" value="SKP1"/>
</dbReference>
<dbReference type="InterPro" id="IPR001232">
    <property type="entry name" value="SKP1-like"/>
</dbReference>
<dbReference type="InterPro" id="IPR036296">
    <property type="entry name" value="SKP1-like_dim_sf"/>
</dbReference>
<dbReference type="InterPro" id="IPR011333">
    <property type="entry name" value="SKP1/BTB/POZ_sf"/>
</dbReference>
<dbReference type="InterPro" id="IPR016072">
    <property type="entry name" value="Skp1_comp_dimer"/>
</dbReference>
<dbReference type="InterPro" id="IPR016073">
    <property type="entry name" value="Skp1_comp_POZ"/>
</dbReference>
<dbReference type="PANTHER" id="PTHR11165">
    <property type="entry name" value="SKP1"/>
    <property type="match status" value="1"/>
</dbReference>
<dbReference type="Pfam" id="PF01466">
    <property type="entry name" value="Skp1"/>
    <property type="match status" value="1"/>
</dbReference>
<dbReference type="Pfam" id="PF03931">
    <property type="entry name" value="Skp1_POZ"/>
    <property type="match status" value="1"/>
</dbReference>
<dbReference type="PIRSF" id="PIRSF028729">
    <property type="entry name" value="E3_ubiquit_lig_SCF_Skp"/>
    <property type="match status" value="1"/>
</dbReference>
<dbReference type="SMART" id="SM00512">
    <property type="entry name" value="Skp1"/>
    <property type="match status" value="1"/>
</dbReference>
<dbReference type="SUPFAM" id="SSF54695">
    <property type="entry name" value="POZ domain"/>
    <property type="match status" value="1"/>
</dbReference>
<dbReference type="SUPFAM" id="SSF81382">
    <property type="entry name" value="Skp1 dimerisation domain-like"/>
    <property type="match status" value="1"/>
</dbReference>
<feature type="chain" id="PRO_0000375255" description="SKP1-like protein 14">
    <location>
        <begin position="1"/>
        <end position="149"/>
    </location>
</feature>
<feature type="region of interest" description="Interaction with the F-box domain of F-box proteins" evidence="1">
    <location>
        <begin position="91"/>
        <end position="149"/>
    </location>
</feature>
<organism>
    <name type="scientific">Arabidopsis thaliana</name>
    <name type="common">Mouse-ear cress</name>
    <dbReference type="NCBI Taxonomy" id="3702"/>
    <lineage>
        <taxon>Eukaryota</taxon>
        <taxon>Viridiplantae</taxon>
        <taxon>Streptophyta</taxon>
        <taxon>Embryophyta</taxon>
        <taxon>Tracheophyta</taxon>
        <taxon>Spermatophyta</taxon>
        <taxon>Magnoliopsida</taxon>
        <taxon>eudicotyledons</taxon>
        <taxon>Gunneridae</taxon>
        <taxon>Pentapetalae</taxon>
        <taxon>rosids</taxon>
        <taxon>malvids</taxon>
        <taxon>Brassicales</taxon>
        <taxon>Brassicaceae</taxon>
        <taxon>Camelineae</taxon>
        <taxon>Arabidopsis</taxon>
    </lineage>
</organism>